<feature type="chain" id="PRO_0000280173" description="Pyoverdine export ATP-binding/permease protein PvdT">
    <location>
        <begin position="1"/>
        <end position="654"/>
    </location>
</feature>
<feature type="transmembrane region" description="Helical" evidence="3">
    <location>
        <begin position="282"/>
        <end position="302"/>
    </location>
</feature>
<feature type="transmembrane region" description="Helical" evidence="3">
    <location>
        <begin position="529"/>
        <end position="549"/>
    </location>
</feature>
<feature type="transmembrane region" description="Helical" evidence="3">
    <location>
        <begin position="596"/>
        <end position="616"/>
    </location>
</feature>
<feature type="transmembrane region" description="Helical" evidence="3">
    <location>
        <begin position="617"/>
        <end position="637"/>
    </location>
</feature>
<feature type="domain" description="ABC transporter" evidence="4">
    <location>
        <begin position="6"/>
        <end position="245"/>
    </location>
</feature>
<feature type="binding site" evidence="4">
    <location>
        <begin position="43"/>
        <end position="50"/>
    </location>
    <ligand>
        <name>ATP</name>
        <dbReference type="ChEBI" id="CHEBI:30616"/>
    </ligand>
</feature>
<reference key="1">
    <citation type="journal article" date="2006" name="Nat. Biotechnol.">
        <title>Complete genome sequence of the entomopathogenic and metabolically versatile soil bacterium Pseudomonas entomophila.</title>
        <authorList>
            <person name="Vodovar N."/>
            <person name="Vallenet D."/>
            <person name="Cruveiller S."/>
            <person name="Rouy Z."/>
            <person name="Barbe V."/>
            <person name="Acosta C."/>
            <person name="Cattolico L."/>
            <person name="Jubin C."/>
            <person name="Lajus A."/>
            <person name="Segurens B."/>
            <person name="Vacherie B."/>
            <person name="Wincker P."/>
            <person name="Weissenbach J."/>
            <person name="Lemaitre B."/>
            <person name="Medigue C."/>
            <person name="Boccard F."/>
        </authorList>
    </citation>
    <scope>NUCLEOTIDE SEQUENCE [LARGE SCALE GENOMIC DNA]</scope>
    <source>
        <strain>L48</strain>
    </source>
</reference>
<gene>
    <name evidence="1" type="primary">pvdT</name>
    <name type="ordered locus">PSEEN3665</name>
</gene>
<keyword id="KW-0067">ATP-binding</keyword>
<keyword id="KW-0997">Cell inner membrane</keyword>
<keyword id="KW-1003">Cell membrane</keyword>
<keyword id="KW-0472">Membrane</keyword>
<keyword id="KW-0547">Nucleotide-binding</keyword>
<keyword id="KW-1278">Translocase</keyword>
<keyword id="KW-0812">Transmembrane</keyword>
<keyword id="KW-1133">Transmembrane helix</keyword>
<keyword id="KW-0813">Transport</keyword>
<name>PVDT_PSEE4</name>
<comment type="function">
    <text evidence="1 2">Part of the tripartite efflux system PvdRT-OpmQ required for the secretion into the extracellular milieu of the siderophore pyoverdine (PVD), which is involved in iron acquisition (By similarity). This subunit binds PVD and drives its secretion by hydrolyzing ATP (By similarity). The system is responsible for export of newly synthesized PVD after the final steps of biosynthesis have taken place in the periplasm (By similarity). It is also responsible for recycling of PVD after internalization of ferri-PVD into the periplasm by the outer-membrane receptor FpvA and release of iron from PVD, thus making PVD available for new cycles of iron uptake (By similarity).</text>
</comment>
<comment type="subunit">
    <text evidence="2">Part of the tripartite efflux system PvdRT-OpmQ, which is composed of an inner membrane component with both ATPase and permease domains, PvdT, a periplasmic membrane fusion protein, PvdR, and an outer membrane component, OpmQ.</text>
</comment>
<comment type="subcellular location">
    <subcellularLocation>
        <location evidence="1">Cell inner membrane</location>
        <topology evidence="3">Multi-pass membrane protein</topology>
    </subcellularLocation>
</comment>
<comment type="similarity">
    <text evidence="5">Belongs to the ABC transporter superfamily. Macrolide exporter (TC 3.A.1.122) family.</text>
</comment>
<proteinExistence type="inferred from homology"/>
<organism>
    <name type="scientific">Pseudomonas entomophila (strain L48)</name>
    <dbReference type="NCBI Taxonomy" id="384676"/>
    <lineage>
        <taxon>Bacteria</taxon>
        <taxon>Pseudomonadati</taxon>
        <taxon>Pseudomonadota</taxon>
        <taxon>Gammaproteobacteria</taxon>
        <taxon>Pseudomonadales</taxon>
        <taxon>Pseudomonadaceae</taxon>
        <taxon>Pseudomonas</taxon>
    </lineage>
</organism>
<sequence length="654" mass="69628">MSAPLIELCDIRKAYGGIDSPKVEVLRGISLSIHPGEFVAIVGASGSGKSTLMNILGCLDRPTSGSYRFAGRDVAELDSDELAWLRREAFGFVFQGYHLIPSGSAQENVEMPAIYAGTPPAERHARALALLDRLGLASRTGNRPHQLSGGQQQRVSIARALMNGGHIILADEPTGALDSHSGAEVMALLDELASQGHVIILITHDREVAARAQRIIEIRDGQMVSDSAASQPSPAQPEQLQANDLRQRLDRGAILKGAWKGEMIEALQAAWRVMWINRFRTALTLLGIIIGVASVVVMLAVGEGSKRQVMAQMAAFGSNILYLNGKRATAQEPGGIVTLDDVAAIGELPQVLHVMPVIGGQLMVRQGNSSQKFYVGGNNTWFPAIFNWPVVEGTFFSEADEASGAAVAVIGQKVRSKMFGEGSNPLGQYLLIGNVPFQVVGILAAKGASSGSEDSDERIVVPYSAASIRLFGSHDPEYVAIAAIDSRRVNETEAAIDRLLRQRHQGKHDFDLTNDAALIQAEARTQNSLSLMLGAIAAISLLVGGIGVMNIMLMTVRERTREIGIRMATGARQRDILRQFLTEAVMLSMVGGVTGIVIALLVGGGLLLADIAVAFALPAILGAFACAVITGVVFGFMPARKAARLDPVKALTSE</sequence>
<protein>
    <recommendedName>
        <fullName evidence="1">Pyoverdine export ATP-binding/permease protein PvdT</fullName>
        <ecNumber evidence="1">7.6.2.-</ecNumber>
    </recommendedName>
</protein>
<dbReference type="EC" id="7.6.2.-" evidence="1"/>
<dbReference type="EMBL" id="CT573326">
    <property type="protein sequence ID" value="CAK16390.1"/>
    <property type="molecule type" value="Genomic_DNA"/>
</dbReference>
<dbReference type="RefSeq" id="WP_011534771.1">
    <property type="nucleotide sequence ID" value="NC_008027.1"/>
</dbReference>
<dbReference type="SMR" id="Q1I7I9"/>
<dbReference type="STRING" id="384676.PSEEN3665"/>
<dbReference type="GeneID" id="32806723"/>
<dbReference type="KEGG" id="pen:PSEEN3665"/>
<dbReference type="eggNOG" id="COG0577">
    <property type="taxonomic scope" value="Bacteria"/>
</dbReference>
<dbReference type="eggNOG" id="COG1136">
    <property type="taxonomic scope" value="Bacteria"/>
</dbReference>
<dbReference type="HOGENOM" id="CLU_000604_78_2_6"/>
<dbReference type="OrthoDB" id="9770036at2"/>
<dbReference type="Proteomes" id="UP000000658">
    <property type="component" value="Chromosome"/>
</dbReference>
<dbReference type="GO" id="GO:0005886">
    <property type="term" value="C:plasma membrane"/>
    <property type="evidence" value="ECO:0007669"/>
    <property type="project" value="UniProtKB-SubCell"/>
</dbReference>
<dbReference type="GO" id="GO:0005524">
    <property type="term" value="F:ATP binding"/>
    <property type="evidence" value="ECO:0007669"/>
    <property type="project" value="UniProtKB-KW"/>
</dbReference>
<dbReference type="GO" id="GO:0016887">
    <property type="term" value="F:ATP hydrolysis activity"/>
    <property type="evidence" value="ECO:0007669"/>
    <property type="project" value="InterPro"/>
</dbReference>
<dbReference type="GO" id="GO:0022857">
    <property type="term" value="F:transmembrane transporter activity"/>
    <property type="evidence" value="ECO:0007669"/>
    <property type="project" value="TreeGrafter"/>
</dbReference>
<dbReference type="CDD" id="cd03255">
    <property type="entry name" value="ABC_MJ0796_LolCDE_FtsE"/>
    <property type="match status" value="1"/>
</dbReference>
<dbReference type="FunFam" id="3.40.50.300:FF:000032">
    <property type="entry name" value="Export ABC transporter ATP-binding protein"/>
    <property type="match status" value="1"/>
</dbReference>
<dbReference type="Gene3D" id="3.40.50.300">
    <property type="entry name" value="P-loop containing nucleotide triphosphate hydrolases"/>
    <property type="match status" value="1"/>
</dbReference>
<dbReference type="InterPro" id="IPR003593">
    <property type="entry name" value="AAA+_ATPase"/>
</dbReference>
<dbReference type="InterPro" id="IPR003838">
    <property type="entry name" value="ABC3_permease_C"/>
</dbReference>
<dbReference type="InterPro" id="IPR003439">
    <property type="entry name" value="ABC_transporter-like_ATP-bd"/>
</dbReference>
<dbReference type="InterPro" id="IPR017871">
    <property type="entry name" value="ABC_transporter-like_CS"/>
</dbReference>
<dbReference type="InterPro" id="IPR017911">
    <property type="entry name" value="MacB-like_ATP-bd"/>
</dbReference>
<dbReference type="InterPro" id="IPR025857">
    <property type="entry name" value="MacB_PCD"/>
</dbReference>
<dbReference type="InterPro" id="IPR050250">
    <property type="entry name" value="Macrolide_Exporter_MacB"/>
</dbReference>
<dbReference type="InterPro" id="IPR027417">
    <property type="entry name" value="P-loop_NTPase"/>
</dbReference>
<dbReference type="PANTHER" id="PTHR30572:SF14">
    <property type="entry name" value="MACROLIDE EXPORT ATP-BINDING_PERMEASE PROTEIN MACB"/>
    <property type="match status" value="1"/>
</dbReference>
<dbReference type="PANTHER" id="PTHR30572">
    <property type="entry name" value="MEMBRANE COMPONENT OF TRANSPORTER-RELATED"/>
    <property type="match status" value="1"/>
</dbReference>
<dbReference type="Pfam" id="PF00005">
    <property type="entry name" value="ABC_tran"/>
    <property type="match status" value="1"/>
</dbReference>
<dbReference type="Pfam" id="PF02687">
    <property type="entry name" value="FtsX"/>
    <property type="match status" value="1"/>
</dbReference>
<dbReference type="Pfam" id="PF12704">
    <property type="entry name" value="MacB_PCD"/>
    <property type="match status" value="1"/>
</dbReference>
<dbReference type="SMART" id="SM00382">
    <property type="entry name" value="AAA"/>
    <property type="match status" value="1"/>
</dbReference>
<dbReference type="SUPFAM" id="SSF52540">
    <property type="entry name" value="P-loop containing nucleoside triphosphate hydrolases"/>
    <property type="match status" value="1"/>
</dbReference>
<dbReference type="PROSITE" id="PS00211">
    <property type="entry name" value="ABC_TRANSPORTER_1"/>
    <property type="match status" value="1"/>
</dbReference>
<dbReference type="PROSITE" id="PS50893">
    <property type="entry name" value="ABC_TRANSPORTER_2"/>
    <property type="match status" value="1"/>
</dbReference>
<dbReference type="PROSITE" id="PS51267">
    <property type="entry name" value="MACB"/>
    <property type="match status" value="1"/>
</dbReference>
<evidence type="ECO:0000250" key="1">
    <source>
        <dbReference type="UniProtKB" id="Q88F88"/>
    </source>
</evidence>
<evidence type="ECO:0000250" key="2">
    <source>
        <dbReference type="UniProtKB" id="Q9I191"/>
    </source>
</evidence>
<evidence type="ECO:0000255" key="3"/>
<evidence type="ECO:0000255" key="4">
    <source>
        <dbReference type="PROSITE-ProRule" id="PRU00434"/>
    </source>
</evidence>
<evidence type="ECO:0000305" key="5"/>
<accession>Q1I7I9</accession>